<sequence length="245" mass="26979">MRFQKNYIITGEILCRTGLHIGVSKDSIEIGGSDNPIIRDPVTRLPYIPGSSIKGKMRSLLELELDRVSNGGPCKCGKCEICRVFGSAADSSSSSGPTRTDSSSSSGPTRIIVRDAFPTDETVEEWKESSEVVEGAELKYENNLNRITSMANPRNQERVPRGSKFGFEIIVSEYDGDSDNLRIVLEGLRLLEDSYLGGSGTRGYGKIEFKNIKIRERPVEYYRGEAGESTMGDFESLADINTTAE</sequence>
<comment type="function">
    <text evidence="1">CRISPR (clustered regularly interspaced short palindromic repeat) is an adaptive immune system that provides protection against mobile genetic elements (viruses, transposable elements and conjugative plasmids). CRISPR clusters contain spacers, sequences complementary to antecedent mobile elements, and target invading nucleic acids. CRISPR clusters are transcribed and processed into CRISPR RNA (crRNA). The type III-A Csm effector complex binds crRNA and acts as a crRNA-guided RNase, DNase and cyclic oligoadenylate synthase; binding of target RNA cognate to the crRNA is required for all activities.</text>
</comment>
<comment type="function">
    <text evidence="1">This subunit has the target ssRNA endonuclease activity; it cleaves multiple sites in the target RNA at 6 nucleotide intervals.</text>
</comment>
<comment type="subunit">
    <text evidence="1">Part of the Csm effector complex that includes Cas10, Csm2, Csm3, Csm4 and Csm5.</text>
</comment>
<comment type="miscellaneous">
    <text evidence="3">Encoded in a type III-A CRISPR locus.</text>
</comment>
<comment type="similarity">
    <text evidence="3">Belongs to the CRISPR-associated Csm3 family.</text>
</comment>
<organism>
    <name type="scientific">Methanothermobacter thermautotrophicus (strain ATCC 29096 / DSM 1053 / JCM 10044 / NBRC 100330 / Delta H)</name>
    <name type="common">Methanobacterium thermoautotrophicum</name>
    <dbReference type="NCBI Taxonomy" id="187420"/>
    <lineage>
        <taxon>Archaea</taxon>
        <taxon>Methanobacteriati</taxon>
        <taxon>Methanobacteriota</taxon>
        <taxon>Methanomada group</taxon>
        <taxon>Methanobacteria</taxon>
        <taxon>Methanobacteriales</taxon>
        <taxon>Methanobacteriaceae</taxon>
        <taxon>Methanothermobacter</taxon>
    </lineage>
</organism>
<reference key="1">
    <citation type="journal article" date="1997" name="J. Bacteriol.">
        <title>Complete genome sequence of Methanobacterium thermoautotrophicum deltaH: functional analysis and comparative genomics.</title>
        <authorList>
            <person name="Smith D.R."/>
            <person name="Doucette-Stamm L.A."/>
            <person name="Deloughery C."/>
            <person name="Lee H.-M."/>
            <person name="Dubois J."/>
            <person name="Aldredge T."/>
            <person name="Bashirzadeh R."/>
            <person name="Blakely D."/>
            <person name="Cook R."/>
            <person name="Gilbert K."/>
            <person name="Harrison D."/>
            <person name="Hoang L."/>
            <person name="Keagle P."/>
            <person name="Lumm W."/>
            <person name="Pothier B."/>
            <person name="Qiu D."/>
            <person name="Spadafora R."/>
            <person name="Vicare R."/>
            <person name="Wang Y."/>
            <person name="Wierzbowski J."/>
            <person name="Gibson R."/>
            <person name="Jiwani N."/>
            <person name="Caruso A."/>
            <person name="Bush D."/>
            <person name="Safer H."/>
            <person name="Patwell D."/>
            <person name="Prabhakar S."/>
            <person name="McDougall S."/>
            <person name="Shimer G."/>
            <person name="Goyal A."/>
            <person name="Pietrovski S."/>
            <person name="Church G.M."/>
            <person name="Daniels C.J."/>
            <person name="Mao J.-I."/>
            <person name="Rice P."/>
            <person name="Noelling J."/>
            <person name="Reeve J.N."/>
        </authorList>
    </citation>
    <scope>NUCLEOTIDE SEQUENCE [LARGE SCALE GENOMIC DNA]</scope>
    <source>
        <strain>ATCC 29096 / DSM 1053 / JCM 10044 / NBRC 100330 / Delta H</strain>
    </source>
</reference>
<dbReference type="EC" id="3.1.-.-"/>
<dbReference type="EMBL" id="AE000666">
    <property type="protein sequence ID" value="AAB85569.1"/>
    <property type="molecule type" value="Genomic_DNA"/>
</dbReference>
<dbReference type="PIR" id="E69010">
    <property type="entry name" value="E69010"/>
</dbReference>
<dbReference type="RefSeq" id="WP_010876704.1">
    <property type="nucleotide sequence ID" value="NC_000916.1"/>
</dbReference>
<dbReference type="SMR" id="O27152"/>
<dbReference type="FunCoup" id="O27152">
    <property type="interactions" value="1"/>
</dbReference>
<dbReference type="STRING" id="187420.MTH_1080"/>
<dbReference type="PaxDb" id="187420-MTH_1080"/>
<dbReference type="EnsemblBacteria" id="AAB85569">
    <property type="protein sequence ID" value="AAB85569"/>
    <property type="gene ID" value="MTH_1080"/>
</dbReference>
<dbReference type="GeneID" id="1471488"/>
<dbReference type="GeneID" id="77401611"/>
<dbReference type="KEGG" id="mth:MTH_1080"/>
<dbReference type="PATRIC" id="fig|187420.15.peg.1058"/>
<dbReference type="HOGENOM" id="CLU_067743_0_0_2"/>
<dbReference type="InParanoid" id="O27152"/>
<dbReference type="Proteomes" id="UP000005223">
    <property type="component" value="Chromosome"/>
</dbReference>
<dbReference type="GO" id="GO:0004519">
    <property type="term" value="F:endonuclease activity"/>
    <property type="evidence" value="ECO:0007669"/>
    <property type="project" value="UniProtKB-KW"/>
</dbReference>
<dbReference type="GO" id="GO:0003723">
    <property type="term" value="F:RNA binding"/>
    <property type="evidence" value="ECO:0007669"/>
    <property type="project" value="UniProtKB-KW"/>
</dbReference>
<dbReference type="GO" id="GO:0051607">
    <property type="term" value="P:defense response to virus"/>
    <property type="evidence" value="ECO:0007669"/>
    <property type="project" value="UniProtKB-KW"/>
</dbReference>
<dbReference type="CDD" id="cd09684">
    <property type="entry name" value="Csm3_III-A"/>
    <property type="match status" value="1"/>
</dbReference>
<dbReference type="InterPro" id="IPR013412">
    <property type="entry name" value="CRISPR-assoc_RAMP_Csm3"/>
</dbReference>
<dbReference type="InterPro" id="IPR052216">
    <property type="entry name" value="CRISPR_Csm3_endoribonuclease"/>
</dbReference>
<dbReference type="InterPro" id="IPR005537">
    <property type="entry name" value="RAMP_III_fam"/>
</dbReference>
<dbReference type="NCBIfam" id="TIGR02582">
    <property type="entry name" value="cas7_TM1809"/>
    <property type="match status" value="1"/>
</dbReference>
<dbReference type="PANTHER" id="PTHR35579">
    <property type="entry name" value="CRISPR SYSTEM CMS ENDORIBONUCLEASE CSM3"/>
    <property type="match status" value="1"/>
</dbReference>
<dbReference type="PANTHER" id="PTHR35579:SF3">
    <property type="entry name" value="CRISPR SYSTEM CMS ENDORIBONUCLEASE CSM3"/>
    <property type="match status" value="1"/>
</dbReference>
<dbReference type="Pfam" id="PF03787">
    <property type="entry name" value="RAMPs"/>
    <property type="match status" value="1"/>
</dbReference>
<gene>
    <name type="primary">csm3</name>
    <name type="ordered locus">MTH_1080</name>
</gene>
<feature type="chain" id="PRO_0000107467" description="CRISPR system Cms endoribonuclease Csm3">
    <location>
        <begin position="1"/>
        <end position="245"/>
    </location>
</feature>
<feature type="region of interest" description="Disordered" evidence="2">
    <location>
        <begin position="88"/>
        <end position="110"/>
    </location>
</feature>
<keyword id="KW-0051">Antiviral defense</keyword>
<keyword id="KW-0255">Endonuclease</keyword>
<keyword id="KW-0378">Hydrolase</keyword>
<keyword id="KW-0540">Nuclease</keyword>
<keyword id="KW-1185">Reference proteome</keyword>
<keyword id="KW-0694">RNA-binding</keyword>
<protein>
    <recommendedName>
        <fullName>CRISPR system Cms endoribonuclease Csm3</fullName>
        <ecNumber>3.1.-.-</ecNumber>
    </recommendedName>
    <alternativeName>
        <fullName>CRISPR type III A-associated RAMP protein Csm3</fullName>
    </alternativeName>
</protein>
<accession>O27152</accession>
<proteinExistence type="inferred from homology"/>
<name>CSM3_METTH</name>
<evidence type="ECO:0000250" key="1">
    <source>
        <dbReference type="UniProtKB" id="A0A0A7HIF0"/>
    </source>
</evidence>
<evidence type="ECO:0000256" key="2">
    <source>
        <dbReference type="SAM" id="MobiDB-lite"/>
    </source>
</evidence>
<evidence type="ECO:0000305" key="3"/>